<name>PR4B_TOBAC</name>
<evidence type="ECO:0000250" key="1"/>
<evidence type="ECO:0000255" key="2"/>
<evidence type="ECO:0000255" key="3">
    <source>
        <dbReference type="PROSITE-ProRule" id="PRU00527"/>
    </source>
</evidence>
<organism>
    <name type="scientific">Nicotiana tabacum</name>
    <name type="common">Common tobacco</name>
    <dbReference type="NCBI Taxonomy" id="4097"/>
    <lineage>
        <taxon>Eukaryota</taxon>
        <taxon>Viridiplantae</taxon>
        <taxon>Streptophyta</taxon>
        <taxon>Embryophyta</taxon>
        <taxon>Tracheophyta</taxon>
        <taxon>Spermatophyta</taxon>
        <taxon>Magnoliopsida</taxon>
        <taxon>eudicotyledons</taxon>
        <taxon>Gunneridae</taxon>
        <taxon>Pentapetalae</taxon>
        <taxon>asterids</taxon>
        <taxon>lamiids</taxon>
        <taxon>Solanales</taxon>
        <taxon>Solanaceae</taxon>
        <taxon>Nicotianoideae</taxon>
        <taxon>Nicotianeae</taxon>
        <taxon>Nicotiana</taxon>
    </lineage>
</organism>
<feature type="signal peptide" evidence="2">
    <location>
        <begin position="1"/>
        <end position="25"/>
    </location>
</feature>
<feature type="chain" id="PRO_0000002792" description="Pathogenesis-related protein PR-4B">
    <location>
        <begin position="26"/>
        <end position="147"/>
    </location>
</feature>
<feature type="domain" description="Barwin" evidence="3">
    <location>
        <begin position="26"/>
        <end position="147"/>
    </location>
</feature>
<feature type="disulfide bond" evidence="1">
    <location>
        <begin position="54"/>
        <end position="86"/>
    </location>
</feature>
<feature type="disulfide bond" evidence="1">
    <location>
        <begin position="75"/>
        <end position="109"/>
    </location>
</feature>
<feature type="disulfide bond" evidence="1">
    <location>
        <begin position="89"/>
        <end position="145"/>
    </location>
</feature>
<keyword id="KW-0134">Cell wall</keyword>
<keyword id="KW-1015">Disulfide bond</keyword>
<keyword id="KW-0568">Pathogenesis-related protein</keyword>
<keyword id="KW-0611">Plant defense</keyword>
<keyword id="KW-1185">Reference proteome</keyword>
<keyword id="KW-0964">Secreted</keyword>
<keyword id="KW-0732">Signal</keyword>
<accession>P29063</accession>
<sequence>MERVNNYKLCVALLIMSVMMAMAAAQSATNVRSTYHLYNPQNINWDLRAASAFCATWDADKPLAWRQKYGWTAFCGPAGPRGQDSCGRCLRVTNTGTGTQATVRIVDQCSNGGLDLDVNVFNQLDTNGLGYQQGHLIVNYEFVNCND</sequence>
<reference key="1">
    <citation type="journal article" date="1991" name="Mol. Gen. Genet.">
        <title>Pathogenesis-related protein 4 is structurally homologous to the carboxy-terminal domains of hevein, Win-1 and Win-2.</title>
        <authorList>
            <person name="Friedrich L."/>
            <person name="Moyer M."/>
            <person name="Ward E."/>
            <person name="Ryals J."/>
        </authorList>
    </citation>
    <scope>NUCLEOTIDE SEQUENCE [MRNA]</scope>
    <source>
        <strain>cv. Xanthi</strain>
        <tissue>Leaf</tissue>
    </source>
</reference>
<dbReference type="EMBL" id="X60282">
    <property type="protein sequence ID" value="CAA42821.1"/>
    <property type="molecule type" value="mRNA"/>
</dbReference>
<dbReference type="RefSeq" id="NP_001392108.1">
    <property type="nucleotide sequence ID" value="NM_001405179.1"/>
</dbReference>
<dbReference type="RefSeq" id="XP_016440550.1">
    <property type="nucleotide sequence ID" value="XM_016585064.1"/>
</dbReference>
<dbReference type="RefSeq" id="XP_016440551.1">
    <property type="nucleotide sequence ID" value="XM_016585065.1"/>
</dbReference>
<dbReference type="SMR" id="P29063"/>
<dbReference type="STRING" id="4097.P29063"/>
<dbReference type="PaxDb" id="4097-P29063"/>
<dbReference type="GeneID" id="107766311"/>
<dbReference type="KEGG" id="nta:107766311"/>
<dbReference type="OMA" id="VVDQCAN"/>
<dbReference type="OrthoDB" id="5985073at2759"/>
<dbReference type="Proteomes" id="UP000084051">
    <property type="component" value="Unplaced"/>
</dbReference>
<dbReference type="GO" id="GO:0005576">
    <property type="term" value="C:extracellular region"/>
    <property type="evidence" value="ECO:0007669"/>
    <property type="project" value="UniProtKB-KW"/>
</dbReference>
<dbReference type="GO" id="GO:0004540">
    <property type="term" value="F:RNA nuclease activity"/>
    <property type="evidence" value="ECO:0007669"/>
    <property type="project" value="InterPro"/>
</dbReference>
<dbReference type="GO" id="GO:0042742">
    <property type="term" value="P:defense response to bacterium"/>
    <property type="evidence" value="ECO:0007669"/>
    <property type="project" value="InterPro"/>
</dbReference>
<dbReference type="GO" id="GO:0050832">
    <property type="term" value="P:defense response to fungus"/>
    <property type="evidence" value="ECO:0007669"/>
    <property type="project" value="InterPro"/>
</dbReference>
<dbReference type="CDD" id="cd22777">
    <property type="entry name" value="DPBB_barwin-like"/>
    <property type="match status" value="1"/>
</dbReference>
<dbReference type="FunFam" id="2.40.40.10:FF:000007">
    <property type="entry name" value="Papaya barwin-like protein"/>
    <property type="match status" value="1"/>
</dbReference>
<dbReference type="Gene3D" id="2.40.40.10">
    <property type="entry name" value="RlpA-like domain"/>
    <property type="match status" value="1"/>
</dbReference>
<dbReference type="InterPro" id="IPR018226">
    <property type="entry name" value="Barwin_CS"/>
</dbReference>
<dbReference type="InterPro" id="IPR001153">
    <property type="entry name" value="Barwin_dom"/>
</dbReference>
<dbReference type="InterPro" id="IPR044301">
    <property type="entry name" value="PR4"/>
</dbReference>
<dbReference type="InterPro" id="IPR036908">
    <property type="entry name" value="RlpA-like_sf"/>
</dbReference>
<dbReference type="PANTHER" id="PTHR46351:SF6">
    <property type="entry name" value="PATHOGENESIS-RELATED PROTEIN PR-4A"/>
    <property type="match status" value="1"/>
</dbReference>
<dbReference type="PANTHER" id="PTHR46351">
    <property type="entry name" value="WOUND-INDUCED PROTEIN WIN2"/>
    <property type="match status" value="1"/>
</dbReference>
<dbReference type="Pfam" id="PF00967">
    <property type="entry name" value="Barwin"/>
    <property type="match status" value="1"/>
</dbReference>
<dbReference type="PRINTS" id="PR00602">
    <property type="entry name" value="BARWIN"/>
</dbReference>
<dbReference type="SUPFAM" id="SSF50685">
    <property type="entry name" value="Barwin-like endoglucanases"/>
    <property type="match status" value="1"/>
</dbReference>
<dbReference type="PROSITE" id="PS00771">
    <property type="entry name" value="BARWIN_1"/>
    <property type="match status" value="1"/>
</dbReference>
<dbReference type="PROSITE" id="PS00772">
    <property type="entry name" value="BARWIN_2"/>
    <property type="match status" value="1"/>
</dbReference>
<dbReference type="PROSITE" id="PS51174">
    <property type="entry name" value="BARWIN_3"/>
    <property type="match status" value="1"/>
</dbReference>
<protein>
    <recommendedName>
        <fullName>Pathogenesis-related protein PR-4B</fullName>
    </recommendedName>
</protein>
<comment type="subcellular location">
    <subcellularLocation>
        <location evidence="1">Secreted</location>
        <location evidence="1">Cell wall</location>
    </subcellularLocation>
</comment>
<comment type="induction">
    <text>By TMV infection.</text>
</comment>
<proteinExistence type="evidence at transcript level"/>